<sequence length="466" mass="52584">MSQKPFRVIIVGGSVTGLTLAHSLHRIGVDYIILEKRAKVVVQEGASIGILPNGARVLDQLGLYNTIEQSAAPPESSHIHFPDGFHFISPYPKRMFESFGYPIAFLERRRLLEILYDTLPDKTKLKVNKTVSDIEQYPEGGKYNARVRTIDGDVYEGDLVVGADGVHSRTRREMWRLSGSSPTGDVPVSERNSTSVEYCCVFGISQGLSGLRVGQQVMRIYNGRTLLVVPSKDELVFWFLSQKLDRKYEYSNAPRFTLEDAAAQCLQVADAPIADGIQFQDIWKTRQAFNMVSLEENLFKTWSFGPIVCIGDSMHKMTINFGQGANCAIEDVAVLSNLINELLLENKGMKPTFRDIEVLLRRFNRMHLSRVSDIFNMSWLVARVHAQDGLLRKIIGRYVMPYLGGRFDSRPFRMIADAAALDFLPLPRSSFPGWKMYKSREGGVVRNVFFLLAATVIVAWVCRLWA</sequence>
<feature type="signal peptide" evidence="2">
    <location>
        <begin position="1"/>
        <end position="23"/>
    </location>
</feature>
<feature type="chain" id="PRO_0000451544" description="FAD-dependent monooxygenase dpfgE">
    <location>
        <begin position="24"/>
        <end position="466"/>
    </location>
</feature>
<feature type="transmembrane region" description="Helical" evidence="2">
    <location>
        <begin position="443"/>
        <end position="465"/>
    </location>
</feature>
<feature type="binding site" evidence="1">
    <location>
        <position position="35"/>
    </location>
    <ligand>
        <name>FAD</name>
        <dbReference type="ChEBI" id="CHEBI:57692"/>
    </ligand>
</feature>
<feature type="binding site" evidence="1">
    <location>
        <position position="49"/>
    </location>
    <ligand>
        <name>FAD</name>
        <dbReference type="ChEBI" id="CHEBI:57692"/>
    </ligand>
</feature>
<feature type="binding site" evidence="1">
    <location>
        <position position="108"/>
    </location>
    <ligand>
        <name>FAD</name>
        <dbReference type="ChEBI" id="CHEBI:57692"/>
    </ligand>
</feature>
<feature type="binding site" evidence="1">
    <location>
        <position position="312"/>
    </location>
    <ligand>
        <name>FAD</name>
        <dbReference type="ChEBI" id="CHEBI:57692"/>
    </ligand>
</feature>
<feature type="binding site" evidence="1">
    <location>
        <position position="325"/>
    </location>
    <ligand>
        <name>FAD</name>
        <dbReference type="ChEBI" id="CHEBI:57692"/>
    </ligand>
</feature>
<feature type="glycosylation site" description="N-linked (GlcNAc...) asparagine" evidence="3">
    <location>
        <position position="128"/>
    </location>
</feature>
<feature type="glycosylation site" description="N-linked (GlcNAc...) asparagine" evidence="3">
    <location>
        <position position="192"/>
    </location>
</feature>
<feature type="glycosylation site" description="N-linked (GlcNAc...) asparagine" evidence="3">
    <location>
        <position position="376"/>
    </location>
</feature>
<protein>
    <recommendedName>
        <fullName evidence="5">FAD-dependent monooxygenase dpfgE</fullName>
        <ecNumber evidence="7">1.-.-.-</ecNumber>
    </recommendedName>
    <alternativeName>
        <fullName evidence="5">Diterpenoid pyrone biosynthesis cluster protein E</fullName>
    </alternativeName>
</protein>
<proteinExistence type="evidence at protein level"/>
<dbReference type="EC" id="1.-.-.-" evidence="7"/>
<dbReference type="EMBL" id="HG970333">
    <property type="protein sequence ID" value="CEF79630.1"/>
    <property type="molecule type" value="Genomic_DNA"/>
</dbReference>
<dbReference type="SMR" id="A0A098DME4"/>
<dbReference type="STRING" id="229533.A0A098DME4"/>
<dbReference type="GlyCosmos" id="A0A098DME4">
    <property type="glycosylation" value="3 sites, No reported glycans"/>
</dbReference>
<dbReference type="VEuPathDB" id="FungiDB:FGRAMPH1_01G15661"/>
<dbReference type="eggNOG" id="KOG2614">
    <property type="taxonomic scope" value="Eukaryota"/>
</dbReference>
<dbReference type="InParanoid" id="A0A098DME4"/>
<dbReference type="UniPathway" id="UPA00213"/>
<dbReference type="Proteomes" id="UP000070720">
    <property type="component" value="Chromosome 2"/>
</dbReference>
<dbReference type="GO" id="GO:0016020">
    <property type="term" value="C:membrane"/>
    <property type="evidence" value="ECO:0007669"/>
    <property type="project" value="UniProtKB-SubCell"/>
</dbReference>
<dbReference type="GO" id="GO:0071949">
    <property type="term" value="F:FAD binding"/>
    <property type="evidence" value="ECO:0007669"/>
    <property type="project" value="InterPro"/>
</dbReference>
<dbReference type="GO" id="GO:0004497">
    <property type="term" value="F:monooxygenase activity"/>
    <property type="evidence" value="ECO:0007669"/>
    <property type="project" value="UniProtKB-KW"/>
</dbReference>
<dbReference type="GO" id="GO:0016114">
    <property type="term" value="P:terpenoid biosynthetic process"/>
    <property type="evidence" value="ECO:0007669"/>
    <property type="project" value="UniProtKB-UniPathway"/>
</dbReference>
<dbReference type="Gene3D" id="3.50.50.60">
    <property type="entry name" value="FAD/NAD(P)-binding domain"/>
    <property type="match status" value="1"/>
</dbReference>
<dbReference type="InterPro" id="IPR002938">
    <property type="entry name" value="FAD-bd"/>
</dbReference>
<dbReference type="InterPro" id="IPR036188">
    <property type="entry name" value="FAD/NAD-bd_sf"/>
</dbReference>
<dbReference type="InterPro" id="IPR050562">
    <property type="entry name" value="FAD_mOase_fung"/>
</dbReference>
<dbReference type="PANTHER" id="PTHR47356:SF2">
    <property type="entry name" value="FAD-BINDING DOMAIN-CONTAINING PROTEIN-RELATED"/>
    <property type="match status" value="1"/>
</dbReference>
<dbReference type="PANTHER" id="PTHR47356">
    <property type="entry name" value="FAD-DEPENDENT MONOOXYGENASE ASQG-RELATED"/>
    <property type="match status" value="1"/>
</dbReference>
<dbReference type="Pfam" id="PF01494">
    <property type="entry name" value="FAD_binding_3"/>
    <property type="match status" value="1"/>
</dbReference>
<dbReference type="PRINTS" id="PR00420">
    <property type="entry name" value="RNGMNOXGNASE"/>
</dbReference>
<dbReference type="SUPFAM" id="SSF51905">
    <property type="entry name" value="FAD/NAD(P)-binding domain"/>
    <property type="match status" value="1"/>
</dbReference>
<organism>
    <name type="scientific">Gibberella zeae (strain ATCC MYA-4620 / CBS 123657 / FGSC 9075 / NRRL 31084 / PH-1)</name>
    <name type="common">Wheat head blight fungus</name>
    <name type="synonym">Fusarium graminearum</name>
    <dbReference type="NCBI Taxonomy" id="229533"/>
    <lineage>
        <taxon>Eukaryota</taxon>
        <taxon>Fungi</taxon>
        <taxon>Dikarya</taxon>
        <taxon>Ascomycota</taxon>
        <taxon>Pezizomycotina</taxon>
        <taxon>Sordariomycetes</taxon>
        <taxon>Hypocreomycetidae</taxon>
        <taxon>Hypocreales</taxon>
        <taxon>Nectriaceae</taxon>
        <taxon>Fusarium</taxon>
    </lineage>
</organism>
<keyword id="KW-0274">FAD</keyword>
<keyword id="KW-0285">Flavoprotein</keyword>
<keyword id="KW-0325">Glycoprotein</keyword>
<keyword id="KW-0472">Membrane</keyword>
<keyword id="KW-0503">Monooxygenase</keyword>
<keyword id="KW-0560">Oxidoreductase</keyword>
<keyword id="KW-1185">Reference proteome</keyword>
<keyword id="KW-0732">Signal</keyword>
<keyword id="KW-0812">Transmembrane</keyword>
<keyword id="KW-1133">Transmembrane helix</keyword>
<reference key="1">
    <citation type="journal article" date="2007" name="Science">
        <title>The Fusarium graminearum genome reveals a link between localized polymorphism and pathogen specialization.</title>
        <authorList>
            <person name="Cuomo C.A."/>
            <person name="Gueldener U."/>
            <person name="Xu J.-R."/>
            <person name="Trail F."/>
            <person name="Turgeon B.G."/>
            <person name="Di Pietro A."/>
            <person name="Walton J.D."/>
            <person name="Ma L.-J."/>
            <person name="Baker S.E."/>
            <person name="Rep M."/>
            <person name="Adam G."/>
            <person name="Antoniw J."/>
            <person name="Baldwin T."/>
            <person name="Calvo S.E."/>
            <person name="Chang Y.-L."/>
            <person name="DeCaprio D."/>
            <person name="Gale L.R."/>
            <person name="Gnerre S."/>
            <person name="Goswami R.S."/>
            <person name="Hammond-Kosack K."/>
            <person name="Harris L.J."/>
            <person name="Hilburn K."/>
            <person name="Kennell J.C."/>
            <person name="Kroken S."/>
            <person name="Magnuson J.K."/>
            <person name="Mannhaupt G."/>
            <person name="Mauceli E.W."/>
            <person name="Mewes H.-W."/>
            <person name="Mitterbauer R."/>
            <person name="Muehlbauer G."/>
            <person name="Muensterkoetter M."/>
            <person name="Nelson D."/>
            <person name="O'Donnell K."/>
            <person name="Ouellet T."/>
            <person name="Qi W."/>
            <person name="Quesneville H."/>
            <person name="Roncero M.I.G."/>
            <person name="Seong K.-Y."/>
            <person name="Tetko I.V."/>
            <person name="Urban M."/>
            <person name="Waalwijk C."/>
            <person name="Ward T.J."/>
            <person name="Yao J."/>
            <person name="Birren B.W."/>
            <person name="Kistler H.C."/>
        </authorList>
    </citation>
    <scope>NUCLEOTIDE SEQUENCE [LARGE SCALE GENOMIC DNA]</scope>
    <source>
        <strain>ATCC MYA-4620 / CBS 123657 / FGSC 9075 / NRRL 31084 / PH-1</strain>
    </source>
</reference>
<reference key="2">
    <citation type="journal article" date="2010" name="Nature">
        <title>Comparative genomics reveals mobile pathogenicity chromosomes in Fusarium.</title>
        <authorList>
            <person name="Ma L.-J."/>
            <person name="van der Does H.C."/>
            <person name="Borkovich K.A."/>
            <person name="Coleman J.J."/>
            <person name="Daboussi M.-J."/>
            <person name="Di Pietro A."/>
            <person name="Dufresne M."/>
            <person name="Freitag M."/>
            <person name="Grabherr M."/>
            <person name="Henrissat B."/>
            <person name="Houterman P.M."/>
            <person name="Kang S."/>
            <person name="Shim W.-B."/>
            <person name="Woloshuk C."/>
            <person name="Xie X."/>
            <person name="Xu J.-R."/>
            <person name="Antoniw J."/>
            <person name="Baker S.E."/>
            <person name="Bluhm B.H."/>
            <person name="Breakspear A."/>
            <person name="Brown D.W."/>
            <person name="Butchko R.A.E."/>
            <person name="Chapman S."/>
            <person name="Coulson R."/>
            <person name="Coutinho P.M."/>
            <person name="Danchin E.G.J."/>
            <person name="Diener A."/>
            <person name="Gale L.R."/>
            <person name="Gardiner D.M."/>
            <person name="Goff S."/>
            <person name="Hammond-Kosack K.E."/>
            <person name="Hilburn K."/>
            <person name="Hua-Van A."/>
            <person name="Jonkers W."/>
            <person name="Kazan K."/>
            <person name="Kodira C.D."/>
            <person name="Koehrsen M."/>
            <person name="Kumar L."/>
            <person name="Lee Y.-H."/>
            <person name="Li L."/>
            <person name="Manners J.M."/>
            <person name="Miranda-Saavedra D."/>
            <person name="Mukherjee M."/>
            <person name="Park G."/>
            <person name="Park J."/>
            <person name="Park S.-Y."/>
            <person name="Proctor R.H."/>
            <person name="Regev A."/>
            <person name="Ruiz-Roldan M.C."/>
            <person name="Sain D."/>
            <person name="Sakthikumar S."/>
            <person name="Sykes S."/>
            <person name="Schwartz D.C."/>
            <person name="Turgeon B.G."/>
            <person name="Wapinski I."/>
            <person name="Yoder O."/>
            <person name="Young S."/>
            <person name="Zeng Q."/>
            <person name="Zhou S."/>
            <person name="Galagan J."/>
            <person name="Cuomo C.A."/>
            <person name="Kistler H.C."/>
            <person name="Rep M."/>
        </authorList>
    </citation>
    <scope>GENOME REANNOTATION</scope>
    <source>
        <strain>ATCC MYA-4620 / CBS 123657 / FGSC 9075 / NRRL 31084 / PH-1</strain>
    </source>
</reference>
<reference key="3">
    <citation type="journal article" date="2015" name="BMC Genomics">
        <title>The completed genome sequence of the pathogenic ascomycete fungus Fusarium graminearum.</title>
        <authorList>
            <person name="King R."/>
            <person name="Urban M."/>
            <person name="Hammond-Kosack M.C.U."/>
            <person name="Hassani-Pak K."/>
            <person name="Hammond-Kosack K.E."/>
        </authorList>
    </citation>
    <scope>NUCLEOTIDE SEQUENCE [LARGE SCALE GENOMIC DNA]</scope>
    <source>
        <strain>ATCC MYA-4620 / CBS 123657 / FGSC 9075 / NRRL 31084 / PH-1</strain>
    </source>
</reference>
<reference key="4">
    <citation type="journal article" date="2020" name="Nat. Commun.">
        <title>Synthetic biology based construction of biological activity-related library of fungal decalin-containing diterpenoid pyrones.</title>
        <authorList>
            <person name="Tsukada K."/>
            <person name="Shinki S."/>
            <person name="Kaneko A."/>
            <person name="Murakami K."/>
            <person name="Irie K."/>
            <person name="Murai M."/>
            <person name="Miyoshi H."/>
            <person name="Dan S."/>
            <person name="Kawaji K."/>
            <person name="Hayashi H."/>
            <person name="Kodama E.N."/>
            <person name="Hori A."/>
            <person name="Salim E."/>
            <person name="Kuraishi T."/>
            <person name="Hirata N."/>
            <person name="Kanda Y."/>
            <person name="Asai T."/>
        </authorList>
    </citation>
    <scope>FUNCTION</scope>
    <scope>PATHWAY</scope>
    <scope>BIOTECHNOLOGY</scope>
</reference>
<gene>
    <name evidence="5" type="primary">dpfgE</name>
    <name type="ORF">FG04595</name>
    <name type="ORF">FGRAMPH1_01T15661</name>
</gene>
<name>DPFGE_GIBZE</name>
<comment type="function">
    <text evidence="4 7">FAD-dependent monooxygenase; part of the gene cluster that mediates the biosynthesis of diterpenoid pyrones (PubMed:32286350). The first step of the pathway is the synthesis of the alpha-pyrone moiety by the polyketide synthase dpfgA via condensation of one acetyl-CoA starter unit with 3 malonyl-CoA units and 2 methylations (Probable). The alpha-pyrone is then combined with geranylgeranyl pyrophosphate (GGPP) formed by the GGPP synthase dpfgD through the action of the prenyltransferase dpfgC to yield a linear alpha-pyrone diterpenoid (Probable). Subsequent steps in the diterpenoid pyrone biosynthetic pathway involve the decalin core formation, which is initiated by the epoxidation of the C10-C11 olefin by the FAD-dependent oxidoreductase dpfgE, and is followed by a cyclization cascade catalyzed by the terpene cyclase dpfgB (Probable). The short chain dehydrogenase/reductase dpfgG then oxidizes the 8S hydroxy group to a ketone and the short chain dehydrogenase/reductase dpfgH reduces the ketone to the 8R hydroxy group to yield higginsianin B (PubMed:32286350). Higginsianin B is further methylated by the methyltransferase dpfgI to produce the intermediate named FDDP B (PubMed:32286350). The cytochrome P450 monooxygenase dfgpJ then catalyzes a three-step oxidation at C-27 to generate a carboxylic acid as well as C-26 hydroxylation (PubMed:32286350). Finally, methyltransferase dpfgK methylates the carboxylic acid generated by dpfgJ, yielding the final diterpenoid pyrones from the pathway which were named FDDP D and FDDP E (PubMed:32286350).</text>
</comment>
<comment type="cofactor">
    <cofactor evidence="6">
        <name>FAD</name>
        <dbReference type="ChEBI" id="CHEBI:57692"/>
    </cofactor>
</comment>
<comment type="pathway">
    <text evidence="7">Secondary metabolite biosynthesis; terpenoid biosynthesis.</text>
</comment>
<comment type="subcellular location">
    <subcellularLocation>
        <location evidence="2">Membrane</location>
        <topology evidence="2">Single-pass membrane protein</topology>
    </subcellularLocation>
</comment>
<comment type="biotechnology">
    <text evidence="4">Diterpenoid pyrones display various biological activities and FDDP E shows anti-HIV activity (PubMed:32286350). FDDP D and FDDP E show also inhibitory activity of 42-mer-amyloid beta aggregation that is involved in the pathogenesis of Alzheimer's disease (PubMed:32286350).</text>
</comment>
<comment type="similarity">
    <text evidence="6">Belongs to the paxM FAD-dependent monooxygenase family.</text>
</comment>
<accession>A0A098DME4</accession>
<accession>A0A0E0S805</accession>
<evidence type="ECO:0000250" key="1">
    <source>
        <dbReference type="UniProtKB" id="B8M9J8"/>
    </source>
</evidence>
<evidence type="ECO:0000255" key="2"/>
<evidence type="ECO:0000255" key="3">
    <source>
        <dbReference type="PROSITE-ProRule" id="PRU00498"/>
    </source>
</evidence>
<evidence type="ECO:0000269" key="4">
    <source>
    </source>
</evidence>
<evidence type="ECO:0000303" key="5">
    <source>
    </source>
</evidence>
<evidence type="ECO:0000305" key="6"/>
<evidence type="ECO:0000305" key="7">
    <source>
    </source>
</evidence>